<gene>
    <name evidence="25" type="primary">JMJD6</name>
    <name type="synonym">KIAA0585</name>
    <name evidence="21" type="synonym">PSR</name>
    <name type="synonym">PTDSR</name>
</gene>
<dbReference type="EC" id="1.14.11.-" evidence="8 9 11 14"/>
<dbReference type="EMBL" id="AB073711">
    <property type="protein sequence ID" value="BAC16755.1"/>
    <property type="molecule type" value="mRNA"/>
</dbReference>
<dbReference type="EMBL" id="AB011157">
    <property type="protein sequence ID" value="BAA25511.1"/>
    <property type="status" value="ALT_INIT"/>
    <property type="molecule type" value="mRNA"/>
</dbReference>
<dbReference type="EMBL" id="AK021780">
    <property type="protein sequence ID" value="BAG51050.1"/>
    <property type="molecule type" value="mRNA"/>
</dbReference>
<dbReference type="EMBL" id="AK294816">
    <property type="protein sequence ID" value="BAG57932.1"/>
    <property type="molecule type" value="mRNA"/>
</dbReference>
<dbReference type="EMBL" id="AC005837">
    <property type="status" value="NOT_ANNOTATED_CDS"/>
    <property type="molecule type" value="Genomic_DNA"/>
</dbReference>
<dbReference type="EMBL" id="CH471099">
    <property type="protein sequence ID" value="EAW89434.1"/>
    <property type="molecule type" value="Genomic_DNA"/>
</dbReference>
<dbReference type="EMBL" id="BC047003">
    <property type="protein sequence ID" value="AAH47003.1"/>
    <property type="status" value="ALT_INIT"/>
    <property type="molecule type" value="mRNA"/>
</dbReference>
<dbReference type="EMBL" id="BC066654">
    <property type="protein sequence ID" value="AAH66654.1"/>
    <property type="molecule type" value="mRNA"/>
</dbReference>
<dbReference type="CCDS" id="CCDS42383.1">
    <molecule id="Q6NYC1-3"/>
</dbReference>
<dbReference type="CCDS" id="CCDS42384.1">
    <molecule id="Q6NYC1-1"/>
</dbReference>
<dbReference type="RefSeq" id="NP_001074930.1">
    <molecule id="Q6NYC1-3"/>
    <property type="nucleotide sequence ID" value="NM_001081461.2"/>
</dbReference>
<dbReference type="RefSeq" id="NP_055982.2">
    <molecule id="Q6NYC1-1"/>
    <property type="nucleotide sequence ID" value="NM_015167.3"/>
</dbReference>
<dbReference type="PDB" id="3K2O">
    <property type="method" value="X-ray"/>
    <property type="resolution" value="1.75 A"/>
    <property type="chains" value="A/B=2-335"/>
</dbReference>
<dbReference type="PDB" id="3LD8">
    <property type="method" value="X-ray"/>
    <property type="resolution" value="2.70 A"/>
    <property type="chains" value="A=1-334"/>
</dbReference>
<dbReference type="PDB" id="3LDB">
    <property type="method" value="X-ray"/>
    <property type="resolution" value="2.70 A"/>
    <property type="chains" value="A=1-334"/>
</dbReference>
<dbReference type="PDB" id="6BNH">
    <property type="method" value="NMR"/>
    <property type="chains" value="B=84-96"/>
</dbReference>
<dbReference type="PDB" id="6GDY">
    <property type="method" value="X-ray"/>
    <property type="resolution" value="2.04 A"/>
    <property type="chains" value="A/B=1-343"/>
</dbReference>
<dbReference type="PDB" id="6MEV">
    <property type="method" value="X-ray"/>
    <property type="resolution" value="2.60 A"/>
    <property type="chains" value="A/B/C/D/E/F/G/H=1-341"/>
</dbReference>
<dbReference type="PDBsum" id="3K2O"/>
<dbReference type="PDBsum" id="3LD8"/>
<dbReference type="PDBsum" id="3LDB"/>
<dbReference type="PDBsum" id="6BNH"/>
<dbReference type="PDBsum" id="6GDY"/>
<dbReference type="PDBsum" id="6MEV"/>
<dbReference type="SMR" id="Q6NYC1"/>
<dbReference type="BioGRID" id="116817">
    <property type="interactions" value="203"/>
</dbReference>
<dbReference type="DIP" id="DIP-60686N"/>
<dbReference type="FunCoup" id="Q6NYC1">
    <property type="interactions" value="3728"/>
</dbReference>
<dbReference type="IntAct" id="Q6NYC1">
    <property type="interactions" value="164"/>
</dbReference>
<dbReference type="MINT" id="Q6NYC1"/>
<dbReference type="STRING" id="9606.ENSP00000394085"/>
<dbReference type="BindingDB" id="Q6NYC1"/>
<dbReference type="ChEMBL" id="CHEMBL4523345"/>
<dbReference type="GlyGen" id="Q6NYC1">
    <property type="glycosylation" value="1 site, 1 O-linked glycan (1 site)"/>
</dbReference>
<dbReference type="iPTMnet" id="Q6NYC1"/>
<dbReference type="PhosphoSitePlus" id="Q6NYC1"/>
<dbReference type="BioMuta" id="JMJD6"/>
<dbReference type="DMDM" id="67461014"/>
<dbReference type="jPOST" id="Q6NYC1"/>
<dbReference type="MassIVE" id="Q6NYC1"/>
<dbReference type="PaxDb" id="9606-ENSP00000394085"/>
<dbReference type="PeptideAtlas" id="Q6NYC1"/>
<dbReference type="ProteomicsDB" id="66781">
    <molecule id="Q6NYC1-1"/>
</dbReference>
<dbReference type="ProteomicsDB" id="66782">
    <molecule id="Q6NYC1-2"/>
</dbReference>
<dbReference type="ProteomicsDB" id="66783">
    <molecule id="Q6NYC1-3"/>
</dbReference>
<dbReference type="Pumba" id="Q6NYC1"/>
<dbReference type="ABCD" id="Q6NYC1">
    <property type="antibodies" value="4 sequenced antibodies"/>
</dbReference>
<dbReference type="Antibodypedia" id="3874">
    <property type="antibodies" value="453 antibodies from 41 providers"/>
</dbReference>
<dbReference type="DNASU" id="23210"/>
<dbReference type="Ensembl" id="ENST00000397625.9">
    <molecule id="Q6NYC1-1"/>
    <property type="protein sequence ID" value="ENSP00000380750.4"/>
    <property type="gene ID" value="ENSG00000070495.15"/>
</dbReference>
<dbReference type="Ensembl" id="ENST00000445478.6">
    <molecule id="Q6NYC1-3"/>
    <property type="protein sequence ID" value="ENSP00000394085.2"/>
    <property type="gene ID" value="ENSG00000070495.15"/>
</dbReference>
<dbReference type="GeneID" id="23210"/>
<dbReference type="KEGG" id="hsa:23210"/>
<dbReference type="MANE-Select" id="ENST00000397625.9">
    <property type="protein sequence ID" value="ENSP00000380750.4"/>
    <property type="RefSeq nucleotide sequence ID" value="NM_015167.3"/>
    <property type="RefSeq protein sequence ID" value="NP_055982.2"/>
</dbReference>
<dbReference type="UCSC" id="uc002jsn.2">
    <molecule id="Q6NYC1-1"/>
    <property type="organism name" value="human"/>
</dbReference>
<dbReference type="AGR" id="HGNC:19355"/>
<dbReference type="CTD" id="23210"/>
<dbReference type="DisGeNET" id="23210"/>
<dbReference type="GeneCards" id="JMJD6"/>
<dbReference type="HGNC" id="HGNC:19355">
    <property type="gene designation" value="JMJD6"/>
</dbReference>
<dbReference type="HPA" id="ENSG00000070495">
    <property type="expression patterns" value="Tissue enhanced (bone)"/>
</dbReference>
<dbReference type="MIM" id="604914">
    <property type="type" value="gene"/>
</dbReference>
<dbReference type="neXtProt" id="NX_Q6NYC1"/>
<dbReference type="OpenTargets" id="ENSG00000070495"/>
<dbReference type="PharmGKB" id="PA162392513"/>
<dbReference type="VEuPathDB" id="HostDB:ENSG00000070495"/>
<dbReference type="eggNOG" id="KOG2130">
    <property type="taxonomic scope" value="Eukaryota"/>
</dbReference>
<dbReference type="GeneTree" id="ENSGT00940000156867"/>
<dbReference type="HOGENOM" id="CLU_016785_8_0_1"/>
<dbReference type="InParanoid" id="Q6NYC1"/>
<dbReference type="OMA" id="NAWVAMR"/>
<dbReference type="OrthoDB" id="424465at2759"/>
<dbReference type="PAN-GO" id="Q6NYC1">
    <property type="GO annotations" value="5 GO annotations based on evolutionary models"/>
</dbReference>
<dbReference type="PhylomeDB" id="Q6NYC1"/>
<dbReference type="TreeFam" id="TF314988"/>
<dbReference type="BRENDA" id="1.14.11.4">
    <property type="organism ID" value="2681"/>
</dbReference>
<dbReference type="PathwayCommons" id="Q6NYC1"/>
<dbReference type="Reactome" id="R-HSA-3214842">
    <property type="pathway name" value="HDMs demethylate histones"/>
</dbReference>
<dbReference type="Reactome" id="R-HSA-9629569">
    <property type="pathway name" value="Protein hydroxylation"/>
</dbReference>
<dbReference type="SABIO-RK" id="Q6NYC1"/>
<dbReference type="SignaLink" id="Q6NYC1"/>
<dbReference type="SIGNOR" id="Q6NYC1"/>
<dbReference type="BioGRID-ORCS" id="23210">
    <property type="hits" value="283 hits in 1185 CRISPR screens"/>
</dbReference>
<dbReference type="ChiTaRS" id="JMJD6">
    <property type="organism name" value="human"/>
</dbReference>
<dbReference type="EvolutionaryTrace" id="Q6NYC1"/>
<dbReference type="GeneWiki" id="JMJD6"/>
<dbReference type="GenomeRNAi" id="23210"/>
<dbReference type="Pharos" id="Q6NYC1">
    <property type="development level" value="Tchem"/>
</dbReference>
<dbReference type="PRO" id="PR:Q6NYC1"/>
<dbReference type="Proteomes" id="UP000005640">
    <property type="component" value="Chromosome 17"/>
</dbReference>
<dbReference type="RNAct" id="Q6NYC1">
    <property type="molecule type" value="protein"/>
</dbReference>
<dbReference type="Bgee" id="ENSG00000070495">
    <property type="expression patterns" value="Expressed in saphenous vein and 211 other cell types or tissues"/>
</dbReference>
<dbReference type="ExpressionAtlas" id="Q6NYC1">
    <property type="expression patterns" value="baseline and differential"/>
</dbReference>
<dbReference type="GO" id="GO:0005737">
    <property type="term" value="C:cytoplasm"/>
    <property type="evidence" value="ECO:0000314"/>
    <property type="project" value="UniProtKB"/>
</dbReference>
<dbReference type="GO" id="GO:0005829">
    <property type="term" value="C:cytosol"/>
    <property type="evidence" value="ECO:0007669"/>
    <property type="project" value="Ensembl"/>
</dbReference>
<dbReference type="GO" id="GO:0005730">
    <property type="term" value="C:nucleolus"/>
    <property type="evidence" value="ECO:0000314"/>
    <property type="project" value="UniProtKB"/>
</dbReference>
<dbReference type="GO" id="GO:0005654">
    <property type="term" value="C:nucleoplasm"/>
    <property type="evidence" value="ECO:0000314"/>
    <property type="project" value="HPA"/>
</dbReference>
<dbReference type="GO" id="GO:0005634">
    <property type="term" value="C:nucleus"/>
    <property type="evidence" value="ECO:0000314"/>
    <property type="project" value="UniProtKB"/>
</dbReference>
<dbReference type="GO" id="GO:0005886">
    <property type="term" value="C:plasma membrane"/>
    <property type="evidence" value="ECO:0007669"/>
    <property type="project" value="Ensembl"/>
</dbReference>
<dbReference type="GO" id="GO:1990904">
    <property type="term" value="C:ribonucleoprotein complex"/>
    <property type="evidence" value="ECO:0007669"/>
    <property type="project" value="Ensembl"/>
</dbReference>
<dbReference type="GO" id="GO:0032452">
    <property type="term" value="F:histone demethylase activity"/>
    <property type="evidence" value="ECO:0000314"/>
    <property type="project" value="UniProtKB"/>
</dbReference>
<dbReference type="GO" id="GO:0033746">
    <property type="term" value="F:histone H3R2 demethylase activity"/>
    <property type="evidence" value="ECO:0000314"/>
    <property type="project" value="UniProtKB"/>
</dbReference>
<dbReference type="GO" id="GO:0033749">
    <property type="term" value="F:histone H4R3 demethylase activity"/>
    <property type="evidence" value="ECO:0000314"/>
    <property type="project" value="UniProtKB"/>
</dbReference>
<dbReference type="GO" id="GO:0042802">
    <property type="term" value="F:identical protein binding"/>
    <property type="evidence" value="ECO:0000314"/>
    <property type="project" value="BHF-UCL"/>
</dbReference>
<dbReference type="GO" id="GO:0005506">
    <property type="term" value="F:iron ion binding"/>
    <property type="evidence" value="ECO:0000314"/>
    <property type="project" value="UniProtKB"/>
</dbReference>
<dbReference type="GO" id="GO:0035515">
    <property type="term" value="F:oxidative RNA demethylase activity"/>
    <property type="evidence" value="ECO:0000315"/>
    <property type="project" value="UniProtKB"/>
</dbReference>
<dbReference type="GO" id="GO:0106140">
    <property type="term" value="F:P-TEFb complex binding"/>
    <property type="evidence" value="ECO:0000314"/>
    <property type="project" value="UniProtKB"/>
</dbReference>
<dbReference type="GO" id="GO:0070815">
    <property type="term" value="F:peptidyl-lysine 5-dioxygenase activity"/>
    <property type="evidence" value="ECO:0000314"/>
    <property type="project" value="UniProtKB"/>
</dbReference>
<dbReference type="GO" id="GO:0140457">
    <property type="term" value="F:protein demethylase activity"/>
    <property type="evidence" value="ECO:0000314"/>
    <property type="project" value="UniProtKB"/>
</dbReference>
<dbReference type="GO" id="GO:0003723">
    <property type="term" value="F:RNA binding"/>
    <property type="evidence" value="ECO:0000304"/>
    <property type="project" value="UniProtKB"/>
</dbReference>
<dbReference type="GO" id="GO:0038023">
    <property type="term" value="F:signaling receptor activity"/>
    <property type="evidence" value="ECO:0007669"/>
    <property type="project" value="Ensembl"/>
</dbReference>
<dbReference type="GO" id="GO:0003727">
    <property type="term" value="F:single-stranded RNA binding"/>
    <property type="evidence" value="ECO:0000314"/>
    <property type="project" value="UniProtKB"/>
</dbReference>
<dbReference type="GO" id="GO:0140537">
    <property type="term" value="F:transcription regulator activator activity"/>
    <property type="evidence" value="ECO:0000315"/>
    <property type="project" value="UniProtKB"/>
</dbReference>
<dbReference type="GO" id="GO:0007166">
    <property type="term" value="P:cell surface receptor signaling pathway"/>
    <property type="evidence" value="ECO:0007669"/>
    <property type="project" value="Ensembl"/>
</dbReference>
<dbReference type="GO" id="GO:0006338">
    <property type="term" value="P:chromatin remodeling"/>
    <property type="evidence" value="ECO:0000314"/>
    <property type="project" value="BHF-UCL"/>
</dbReference>
<dbReference type="GO" id="GO:0048821">
    <property type="term" value="P:erythrocyte development"/>
    <property type="evidence" value="ECO:0007669"/>
    <property type="project" value="Ensembl"/>
</dbReference>
<dbReference type="GO" id="GO:0007507">
    <property type="term" value="P:heart development"/>
    <property type="evidence" value="ECO:0007669"/>
    <property type="project" value="Ensembl"/>
</dbReference>
<dbReference type="GO" id="GO:0001822">
    <property type="term" value="P:kidney development"/>
    <property type="evidence" value="ECO:0007669"/>
    <property type="project" value="Ensembl"/>
</dbReference>
<dbReference type="GO" id="GO:0030324">
    <property type="term" value="P:lung development"/>
    <property type="evidence" value="ECO:0007669"/>
    <property type="project" value="Ensembl"/>
</dbReference>
<dbReference type="GO" id="GO:0042116">
    <property type="term" value="P:macrophage activation"/>
    <property type="evidence" value="ECO:0007669"/>
    <property type="project" value="Ensembl"/>
</dbReference>
<dbReference type="GO" id="GO:0140694">
    <property type="term" value="P:membraneless organelle assembly"/>
    <property type="evidence" value="ECO:0000250"/>
    <property type="project" value="UniProt"/>
</dbReference>
<dbReference type="GO" id="GO:0006397">
    <property type="term" value="P:mRNA processing"/>
    <property type="evidence" value="ECO:0007669"/>
    <property type="project" value="UniProtKB-KW"/>
</dbReference>
<dbReference type="GO" id="GO:0032463">
    <property type="term" value="P:negative regulation of protein homooligomerization"/>
    <property type="evidence" value="ECO:0000250"/>
    <property type="project" value="UniProt"/>
</dbReference>
<dbReference type="GO" id="GO:0035513">
    <property type="term" value="P:oxidative RNA demethylation"/>
    <property type="evidence" value="ECO:0000314"/>
    <property type="project" value="UniProtKB"/>
</dbReference>
<dbReference type="GO" id="GO:0018395">
    <property type="term" value="P:peptidyl-lysine hydroxylation to 5-hydroxy-L-lysine"/>
    <property type="evidence" value="ECO:0000314"/>
    <property type="project" value="UniProtKB"/>
</dbReference>
<dbReference type="GO" id="GO:0006909">
    <property type="term" value="P:phagocytosis"/>
    <property type="evidence" value="ECO:0000318"/>
    <property type="project" value="GO_Central"/>
</dbReference>
<dbReference type="GO" id="GO:0045893">
    <property type="term" value="P:positive regulation of DNA-templated transcription"/>
    <property type="evidence" value="ECO:0000315"/>
    <property type="project" value="UniProtKB"/>
</dbReference>
<dbReference type="GO" id="GO:0045944">
    <property type="term" value="P:positive regulation of transcription by RNA polymerase II"/>
    <property type="evidence" value="ECO:0000314"/>
    <property type="project" value="UniProtKB"/>
</dbReference>
<dbReference type="GO" id="GO:0051260">
    <property type="term" value="P:protein homooligomerization"/>
    <property type="evidence" value="ECO:0000314"/>
    <property type="project" value="UniProtKB"/>
</dbReference>
<dbReference type="GO" id="GO:0043654">
    <property type="term" value="P:recognition of apoptotic cell"/>
    <property type="evidence" value="ECO:0007669"/>
    <property type="project" value="Ensembl"/>
</dbReference>
<dbReference type="GO" id="GO:0048024">
    <property type="term" value="P:regulation of mRNA splicing, via spliceosome"/>
    <property type="evidence" value="ECO:0000315"/>
    <property type="project" value="UniProtKB"/>
</dbReference>
<dbReference type="GO" id="GO:0060041">
    <property type="term" value="P:retina development in camera-type eye"/>
    <property type="evidence" value="ECO:0007669"/>
    <property type="project" value="Ensembl"/>
</dbReference>
<dbReference type="GO" id="GO:0008380">
    <property type="term" value="P:RNA splicing"/>
    <property type="evidence" value="ECO:0007669"/>
    <property type="project" value="UniProtKB-KW"/>
</dbReference>
<dbReference type="GO" id="GO:0002040">
    <property type="term" value="P:sprouting angiogenesis"/>
    <property type="evidence" value="ECO:0000250"/>
    <property type="project" value="UniProtKB"/>
</dbReference>
<dbReference type="GO" id="GO:0033077">
    <property type="term" value="P:T cell differentiation in thymus"/>
    <property type="evidence" value="ECO:0007669"/>
    <property type="project" value="Ensembl"/>
</dbReference>
<dbReference type="FunFam" id="1.20.1280.270:FF:000001">
    <property type="entry name" value="Bifunctional arginine demethylase and lysyl-hydroxylase JMJD6"/>
    <property type="match status" value="1"/>
</dbReference>
<dbReference type="FunFam" id="2.60.120.650:FF:000010">
    <property type="entry name" value="bifunctional arginine demethylase and lysyl-hydroxylase JMJD6 isoform X2"/>
    <property type="match status" value="1"/>
</dbReference>
<dbReference type="Gene3D" id="1.20.1280.270">
    <property type="match status" value="1"/>
</dbReference>
<dbReference type="Gene3D" id="2.60.120.650">
    <property type="entry name" value="Cupin"/>
    <property type="match status" value="1"/>
</dbReference>
<dbReference type="InterPro" id="IPR003347">
    <property type="entry name" value="JmjC_dom"/>
</dbReference>
<dbReference type="InterPro" id="IPR050910">
    <property type="entry name" value="JMJD6_ArgDemeth/LysHydrox"/>
</dbReference>
<dbReference type="PANTHER" id="PTHR12480">
    <property type="entry name" value="ARGININE DEMETHYLASE AND LYSYL-HYDROXYLASE JMJD"/>
    <property type="match status" value="1"/>
</dbReference>
<dbReference type="PANTHER" id="PTHR12480:SF32">
    <property type="entry name" value="BIFUNCTIONAL ARGININE DEMETHYLASE AND LYSYL-HYDROXYLASE JMJD6"/>
    <property type="match status" value="1"/>
</dbReference>
<dbReference type="Pfam" id="PF02373">
    <property type="entry name" value="JmjC"/>
    <property type="match status" value="1"/>
</dbReference>
<dbReference type="SMART" id="SM00558">
    <property type="entry name" value="JmjC"/>
    <property type="match status" value="1"/>
</dbReference>
<dbReference type="SUPFAM" id="SSF51197">
    <property type="entry name" value="Clavaminate synthase-like"/>
    <property type="match status" value="1"/>
</dbReference>
<dbReference type="PROSITE" id="PS51184">
    <property type="entry name" value="JMJC"/>
    <property type="match status" value="1"/>
</dbReference>
<evidence type="ECO:0000250" key="1"/>
<evidence type="ECO:0000250" key="2">
    <source>
        <dbReference type="UniProtKB" id="Q9ERI5"/>
    </source>
</evidence>
<evidence type="ECO:0000255" key="3">
    <source>
        <dbReference type="PROSITE-ProRule" id="PRU00538"/>
    </source>
</evidence>
<evidence type="ECO:0000256" key="4">
    <source>
        <dbReference type="SAM" id="MobiDB-lite"/>
    </source>
</evidence>
<evidence type="ECO:0000269" key="5">
    <source>
    </source>
</evidence>
<evidence type="ECO:0000269" key="6">
    <source>
    </source>
</evidence>
<evidence type="ECO:0000269" key="7">
    <source>
    </source>
</evidence>
<evidence type="ECO:0000269" key="8">
    <source>
    </source>
</evidence>
<evidence type="ECO:0000269" key="9">
    <source>
    </source>
</evidence>
<evidence type="ECO:0000269" key="10">
    <source>
    </source>
</evidence>
<evidence type="ECO:0000269" key="11">
    <source>
    </source>
</evidence>
<evidence type="ECO:0000269" key="12">
    <source>
    </source>
</evidence>
<evidence type="ECO:0000269" key="13">
    <source>
    </source>
</evidence>
<evidence type="ECO:0000269" key="14">
    <source>
    </source>
</evidence>
<evidence type="ECO:0000269" key="15">
    <source>
    </source>
</evidence>
<evidence type="ECO:0000269" key="16">
    <source>
    </source>
</evidence>
<evidence type="ECO:0000269" key="17">
    <source>
    </source>
</evidence>
<evidence type="ECO:0000269" key="18">
    <source>
    </source>
</evidence>
<evidence type="ECO:0000269" key="19">
    <source>
    </source>
</evidence>
<evidence type="ECO:0000303" key="20">
    <source>
    </source>
</evidence>
<evidence type="ECO:0000303" key="21">
    <source>
    </source>
</evidence>
<evidence type="ECO:0000303" key="22">
    <source>
    </source>
</evidence>
<evidence type="ECO:0000303" key="23">
    <source ref="1"/>
</evidence>
<evidence type="ECO:0000305" key="24"/>
<evidence type="ECO:0000312" key="25">
    <source>
        <dbReference type="HGNC" id="HGNC:19355"/>
    </source>
</evidence>
<evidence type="ECO:0007744" key="26">
    <source>
        <dbReference type="PDB" id="6BNH"/>
    </source>
</evidence>
<evidence type="ECO:0007744" key="27">
    <source>
    </source>
</evidence>
<evidence type="ECO:0007829" key="28">
    <source>
        <dbReference type="PDB" id="3K2O"/>
    </source>
</evidence>
<evidence type="ECO:0007829" key="29">
    <source>
        <dbReference type="PDB" id="6GDY"/>
    </source>
</evidence>
<sequence length="403" mass="46462">MNHKSKKRIREAKRSARPELKDSLDWTRHNYYESFSLSPAAVADNVERADALQLSVEEFVERYERPYKPVVLLNAQEGWSAQEKWTLERLKRKYRNQKFKCGEDNDGYSVKMKMKYYIEYMESTRDDSPLYIFDSSYGEHPKRRKLLEDYKVPKFFTDDLFQYAGEKRRPPYRWFVMGPPRSGTGIHIDPLGTSAWNALVQGHKRWCLFPTSTPRELIKVTRDEGGNQQDEAITWFNVIYPRTQLPTWPPEFKPLEILQKPGETVFVPGGWWHVVLNLDTTIAITQNFASSTNFPVVWHKTVRGRPKLSRKWYRILKQEHPELAVLADSVDLQESTGIASDSSSDSSSSSSSSSSDSDSECESGSEGDGTVHRRKKRRTCSMVGNGDTTSQDDCVSKERSSSR</sequence>
<protein>
    <recommendedName>
        <fullName evidence="24">Bifunctional arginine demethylase and lysyl-hydroxylase JMJD6</fullName>
        <ecNumber evidence="8 9 11 14">1.14.11.-</ecNumber>
    </recommendedName>
    <alternativeName>
        <fullName>Histone arginine demethylase JMJD6</fullName>
    </alternativeName>
    <alternativeName>
        <fullName>JmjC domain-containing protein 6</fullName>
    </alternativeName>
    <alternativeName>
        <fullName>Jumonji domain-containing protein 6</fullName>
    </alternativeName>
    <alternativeName>
        <fullName>Lysyl-hydroxylase JMJD6</fullName>
    </alternativeName>
    <alternativeName>
        <fullName>Peptide-lysine 5-dioxygenase JMJD6</fullName>
    </alternativeName>
    <alternativeName>
        <fullName>Phosphatidylserine receptor</fullName>
        <shortName>Protein PTDSR</shortName>
    </alternativeName>
</protein>
<feature type="chain" id="PRO_0000129369" description="Bifunctional arginine demethylase and lysyl-hydroxylase JMJD6">
    <location>
        <begin position="1"/>
        <end position="403"/>
    </location>
</feature>
<feature type="domain" description="JmjC" evidence="3">
    <location>
        <begin position="141"/>
        <end position="305"/>
    </location>
</feature>
<feature type="region of interest" description="Disordered" evidence="4">
    <location>
        <begin position="336"/>
        <end position="403"/>
    </location>
</feature>
<feature type="short sequence motif" description="Nuclear localization signal 1" evidence="5">
    <location>
        <begin position="6"/>
        <end position="10"/>
    </location>
</feature>
<feature type="short sequence motif" description="Nuclear localization signal 2" evidence="5">
    <location>
        <begin position="91"/>
        <end position="95"/>
    </location>
</feature>
<feature type="short sequence motif" description="Nuclear localization signal 3" evidence="5">
    <location>
        <begin position="141"/>
        <end position="145"/>
    </location>
</feature>
<feature type="short sequence motif" description="Nuclear localization signal 4" evidence="5">
    <location>
        <begin position="167"/>
        <end position="170"/>
    </location>
</feature>
<feature type="short sequence motif" description="Nuclear localization signal 5" evidence="5">
    <location>
        <begin position="373"/>
        <end position="378"/>
    </location>
</feature>
<feature type="compositionally biased region" description="Low complexity" evidence="4">
    <location>
        <begin position="340"/>
        <end position="356"/>
    </location>
</feature>
<feature type="compositionally biased region" description="Basic and acidic residues" evidence="4">
    <location>
        <begin position="394"/>
        <end position="403"/>
    </location>
</feature>
<feature type="binding site" evidence="1">
    <location>
        <position position="184"/>
    </location>
    <ligand>
        <name>substrate</name>
    </ligand>
</feature>
<feature type="binding site" evidence="10">
    <location>
        <position position="187"/>
    </location>
    <ligand>
        <name>Fe cation</name>
        <dbReference type="ChEBI" id="CHEBI:24875"/>
        <note>catalytic</note>
    </ligand>
</feature>
<feature type="binding site" evidence="10">
    <location>
        <position position="189"/>
    </location>
    <ligand>
        <name>Fe cation</name>
        <dbReference type="ChEBI" id="CHEBI:24875"/>
        <note>catalytic</note>
    </ligand>
</feature>
<feature type="binding site" evidence="10">
    <location>
        <position position="197"/>
    </location>
    <ligand>
        <name>2-oxoglutarate</name>
        <dbReference type="ChEBI" id="CHEBI:16810"/>
    </ligand>
</feature>
<feature type="binding site" evidence="1">
    <location>
        <position position="204"/>
    </location>
    <ligand>
        <name>substrate</name>
    </ligand>
</feature>
<feature type="binding site" evidence="10">
    <location>
        <position position="273"/>
    </location>
    <ligand>
        <name>Fe cation</name>
        <dbReference type="ChEBI" id="CHEBI:24875"/>
        <note>catalytic</note>
    </ligand>
</feature>
<feature type="binding site" evidence="10">
    <location>
        <position position="285"/>
    </location>
    <ligand>
        <name>2-oxoglutarate</name>
        <dbReference type="ChEBI" id="CHEBI:16810"/>
    </ligand>
</feature>
<feature type="modified residue" description="Phosphoserine" evidence="27">
    <location>
        <position position="38"/>
    </location>
</feature>
<feature type="splice variant" id="VSP_014022" description="In isoform 2." evidence="23">
    <location>
        <begin position="361"/>
        <end position="402"/>
    </location>
</feature>
<feature type="splice variant" id="VSP_014023" description="In isoform 2 and isoform 3." evidence="20 22 23">
    <original>R</original>
    <variation>RIRDTCGGRAHP</variation>
    <location>
        <position position="403"/>
    </location>
</feature>
<feature type="mutagenesis site" description="Decreases interaction with the NET domain of BRD4." evidence="17">
    <original>W</original>
    <variation>A</variation>
    <location>
        <position position="85"/>
    </location>
</feature>
<feature type="mutagenesis site" description="Nearly abolishes the interaction with the NET domain of BRD4." evidence="17">
    <original>L</original>
    <variation>A</variation>
    <location>
        <position position="90"/>
    </location>
</feature>
<feature type="mutagenesis site" description="Nearly abolishes the interaction with the NET domain of BRD4." evidence="17">
    <original>K</original>
    <variation>A</variation>
    <location>
        <position position="91"/>
    </location>
</feature>
<feature type="mutagenesis site" description="Nearly abolishes the interaction with the NET domain of BRD4." evidence="17">
    <original>R</original>
    <variation>A</variation>
    <location>
        <position position="95"/>
    </location>
</feature>
<feature type="mutagenesis site" description="Abolishes 2-oxoglutarate-binding and enzyme activity." evidence="11">
    <original>Y</original>
    <variation>F</variation>
    <location>
        <position position="131"/>
    </location>
</feature>
<feature type="mutagenesis site" description="Loss of histone arginine demethylase and lysyl-hydroxylase activities. Abolishes homooligomerisation. Loss of arginine demethylase and a lysyl-hydroxylase activities; when associated with A-189 and A-273." evidence="8 9 14 15">
    <original>H</original>
    <variation>A</variation>
    <location>
        <position position="187"/>
    </location>
</feature>
<feature type="mutagenesis site" description="Loss of arginine demethylase and a lysyl-hydroxylase activities; when associated with A-187 and A-273." evidence="8 9">
    <original>D</original>
    <variation>A</variation>
    <location>
        <position position="189"/>
    </location>
</feature>
<feature type="mutagenesis site" description="Impairs enzyme activity without affecting 2-oxoglutarate-binding." evidence="11">
    <original>K</original>
    <variation>A</variation>
    <location>
        <position position="204"/>
    </location>
</feature>
<feature type="mutagenesis site" description="Impairs both hydroxylation activity and 2-oxoglutarate turnover assays." evidence="11">
    <original>E</original>
    <variation>A</variation>
    <location>
        <position position="231"/>
    </location>
</feature>
<feature type="mutagenesis site" description="Loss of arginine demethylase and a lysyl-hydroxylase activities; when associated with A-187 and A-189." evidence="8">
    <original>H</original>
    <variation>A</variation>
    <location>
        <position position="273"/>
    </location>
</feature>
<feature type="mutagenesis site" description="Impairs enzyme activity and 2-oxoglutarate-binding." evidence="11">
    <original>T</original>
    <variation>A</variation>
    <location>
        <position position="285"/>
    </location>
</feature>
<feature type="mutagenesis site" description="Impairs enzyme activity." evidence="11">
    <original>N</original>
    <variation>A</variation>
    <location>
        <position position="287"/>
    </location>
</feature>
<feature type="sequence conflict" description="In Ref. 3; BAG51050." evidence="24" ref="3">
    <original>S</original>
    <variation>G</variation>
    <location>
        <position position="136"/>
    </location>
</feature>
<feature type="helix" evidence="28">
    <location>
        <begin position="3"/>
        <end position="16"/>
    </location>
</feature>
<feature type="helix" evidence="28">
    <location>
        <begin position="23"/>
        <end position="27"/>
    </location>
</feature>
<feature type="helix" evidence="28">
    <location>
        <begin position="31"/>
        <end position="34"/>
    </location>
</feature>
<feature type="helix" evidence="28">
    <location>
        <begin position="39"/>
        <end position="41"/>
    </location>
</feature>
<feature type="strand" evidence="28">
    <location>
        <begin position="48"/>
        <end position="50"/>
    </location>
</feature>
<feature type="helix" evidence="28">
    <location>
        <begin position="51"/>
        <end position="53"/>
    </location>
</feature>
<feature type="helix" evidence="28">
    <location>
        <begin position="56"/>
        <end position="62"/>
    </location>
</feature>
<feature type="turn" evidence="28">
    <location>
        <begin position="63"/>
        <end position="67"/>
    </location>
</feature>
<feature type="strand" evidence="28">
    <location>
        <begin position="70"/>
        <end position="74"/>
    </location>
</feature>
<feature type="turn" evidence="28">
    <location>
        <begin position="75"/>
        <end position="78"/>
    </location>
</feature>
<feature type="helix" evidence="28">
    <location>
        <begin position="81"/>
        <end position="84"/>
    </location>
</feature>
<feature type="helix" evidence="28">
    <location>
        <begin position="87"/>
        <end position="93"/>
    </location>
</feature>
<feature type="turn" evidence="29">
    <location>
        <begin position="94"/>
        <end position="96"/>
    </location>
</feature>
<feature type="strand" evidence="28">
    <location>
        <begin position="98"/>
        <end position="103"/>
    </location>
</feature>
<feature type="strand" evidence="28">
    <location>
        <begin position="109"/>
        <end position="113"/>
    </location>
</feature>
<feature type="helix" evidence="28">
    <location>
        <begin position="114"/>
        <end position="123"/>
    </location>
</feature>
<feature type="strand" evidence="28">
    <location>
        <begin position="132"/>
        <end position="135"/>
    </location>
</feature>
<feature type="helix" evidence="28">
    <location>
        <begin position="137"/>
        <end position="139"/>
    </location>
</feature>
<feature type="helix" evidence="28">
    <location>
        <begin position="143"/>
        <end position="149"/>
    </location>
</feature>
<feature type="helix" evidence="28">
    <location>
        <begin position="154"/>
        <end position="156"/>
    </location>
</feature>
<feature type="helix" evidence="28">
    <location>
        <begin position="160"/>
        <end position="164"/>
    </location>
</feature>
<feature type="turn" evidence="28">
    <location>
        <begin position="166"/>
        <end position="168"/>
    </location>
</feature>
<feature type="strand" evidence="28">
    <location>
        <begin position="173"/>
        <end position="178"/>
    </location>
</feature>
<feature type="strand" evidence="28">
    <location>
        <begin position="183"/>
        <end position="187"/>
    </location>
</feature>
<feature type="helix" evidence="28">
    <location>
        <begin position="190"/>
        <end position="192"/>
    </location>
</feature>
<feature type="strand" evidence="28">
    <location>
        <begin position="194"/>
        <end position="202"/>
    </location>
</feature>
<feature type="strand" evidence="28">
    <location>
        <begin position="204"/>
        <end position="209"/>
    </location>
</feature>
<feature type="helix" evidence="28">
    <location>
        <begin position="215"/>
        <end position="218"/>
    </location>
</feature>
<feature type="helix" evidence="28">
    <location>
        <begin position="222"/>
        <end position="225"/>
    </location>
</feature>
<feature type="helix" evidence="28">
    <location>
        <begin position="226"/>
        <end position="228"/>
    </location>
</feature>
<feature type="helix" evidence="28">
    <location>
        <begin position="232"/>
        <end position="238"/>
    </location>
</feature>
<feature type="helix" evidence="28">
    <location>
        <begin position="240"/>
        <end position="244"/>
    </location>
</feature>
<feature type="helix" evidence="28">
    <location>
        <begin position="250"/>
        <end position="252"/>
    </location>
</feature>
<feature type="strand" evidence="28">
    <location>
        <begin position="255"/>
        <end position="259"/>
    </location>
</feature>
<feature type="strand" evidence="28">
    <location>
        <begin position="264"/>
        <end position="267"/>
    </location>
</feature>
<feature type="strand" evidence="28">
    <location>
        <begin position="272"/>
        <end position="279"/>
    </location>
</feature>
<feature type="strand" evidence="28">
    <location>
        <begin position="281"/>
        <end position="288"/>
    </location>
</feature>
<feature type="turn" evidence="28">
    <location>
        <begin position="291"/>
        <end position="293"/>
    </location>
</feature>
<feature type="helix" evidence="28">
    <location>
        <begin position="294"/>
        <end position="304"/>
    </location>
</feature>
<feature type="helix" evidence="28">
    <location>
        <begin position="306"/>
        <end position="319"/>
    </location>
</feature>
<feature type="helix" evidence="28">
    <location>
        <begin position="321"/>
        <end position="333"/>
    </location>
</feature>
<comment type="function">
    <text evidence="2 7 8 9 10 11 12 14 15 16 17">Dioxygenase that can both act as a arginine demethylase and a lysyl-hydroxylase (PubMed:17947579, PubMed:20684070, PubMed:21060799, PubMed:22189873, PubMed:24498420). Acts as a lysyl-hydroxylase that catalyzes 5-hydroxylation on specific lysine residues of target proteins such as U2AF2/U2AF65 and LUC7L2. Regulates RNA splicing by mediating 5-hydroxylation of U2AF2/U2AF65, affecting the pre-mRNA splicing activity of U2AF2/U2AF65 (PubMed:19574390). Hydroxylates its own N-terminus, which is required for homooligomerization (PubMed:22189873). Plays a role in the regulation of nucleolar liquid-liquid phase separation (LLPS) by post-translationally modifying LIAT1 at its lysine-rich domain which inhibits LIAT1 nucleolar targeting (By similarity). In addition to peptidyl-lysine 5-dioxygenase activity, may act as an RNA hydroxylase, as suggested by its ability to bind single strand RNA (PubMed:20679243, PubMed:29176719). Also acts as an arginine demethylase which preferentially demethylates asymmetric dimethylation (PubMed:17947579, PubMed:24360279, PubMed:24498420). Demethylates histone H3 at 'Arg-2' (H3R2me) and histone H4 at 'Arg-3' (H4R3me), including mono-, symmetric di- and asymmetric dimethylated forms, thereby playing a role in histone code (PubMed:17947579, PubMed:24360279). However, histone arginine demethylation may not constitute the primary activity in vivo (PubMed:17947579, PubMed:21060799, PubMed:22189873). In collaboration with BRD4, interacts with the positive transcription elongation factor b (P-TEFb) complex in its active form to regulate polymerase II promoter-proximal pause release for transcriptional activation of a large cohort of genes. On distal enhancers, so called anti-pause enhancers, demethylates both histone H4R3me2 and the methyl cap of 7SKsnRNA leading to the dismissal of the 7SKsnRNA:HEXIM1 inhibitor complex. After removal of repressive marks, the complex BRD4:JMJD6 attract and retain the P-TEFb complex on chromatin, leading to its activation, promoter-proximal polymerase II pause release, and transcriptional activation (PubMed:24360279). Demethylates other arginine methylated-proteins such as ESR1 (PubMed:24498420). Has no histone lysine demethylase activity (PubMed:21060799). Required for differentiation of multiple organs during embryogenesis. Acts as a key regulator of hematopoietic differentiation: required for angiogenic sprouting by regulating the pre-mRNA splicing activity of U2AF2/U2AF65 (By similarity). Seems to be necessary for the regulation of macrophage cytokine responses (PubMed:15622002).</text>
</comment>
<comment type="catalytic activity">
    <reaction evidence="9 11 14">
        <text>L-lysyl-[protein] + 2-oxoglutarate + O2 = (5S)-5-hydroxy-L-lysyl-[protein] + succinate + CO2</text>
        <dbReference type="Rhea" id="RHEA:58360"/>
        <dbReference type="Rhea" id="RHEA-COMP:9752"/>
        <dbReference type="Rhea" id="RHEA-COMP:15144"/>
        <dbReference type="ChEBI" id="CHEBI:15379"/>
        <dbReference type="ChEBI" id="CHEBI:16526"/>
        <dbReference type="ChEBI" id="CHEBI:16810"/>
        <dbReference type="ChEBI" id="CHEBI:29969"/>
        <dbReference type="ChEBI" id="CHEBI:30031"/>
        <dbReference type="ChEBI" id="CHEBI:141843"/>
    </reaction>
</comment>
<comment type="catalytic activity">
    <reaction evidence="8 15">
        <text>N(omega),N(omega)'-dimethyl-L-arginyl-[protein] + 2 2-oxoglutarate + 2 O2 = L-arginyl-[protein] + 2 formaldehyde + 2 succinate + 2 CO2</text>
        <dbReference type="Rhea" id="RHEA:58348"/>
        <dbReference type="Rhea" id="RHEA-COMP:10532"/>
        <dbReference type="Rhea" id="RHEA-COMP:11992"/>
        <dbReference type="ChEBI" id="CHEBI:15379"/>
        <dbReference type="ChEBI" id="CHEBI:16526"/>
        <dbReference type="ChEBI" id="CHEBI:16810"/>
        <dbReference type="ChEBI" id="CHEBI:16842"/>
        <dbReference type="ChEBI" id="CHEBI:29965"/>
        <dbReference type="ChEBI" id="CHEBI:30031"/>
        <dbReference type="ChEBI" id="CHEBI:88221"/>
    </reaction>
</comment>
<comment type="catalytic activity">
    <reaction evidence="8 15">
        <text>N(omega),N(omega)'-dimethyl-L-arginyl-[protein] + 2-oxoglutarate + O2 = N(omega)-methyl-L-arginyl-[protein] + formaldehyde + succinate + CO2</text>
        <dbReference type="Rhea" id="RHEA:58472"/>
        <dbReference type="Rhea" id="RHEA-COMP:11990"/>
        <dbReference type="Rhea" id="RHEA-COMP:11992"/>
        <dbReference type="ChEBI" id="CHEBI:15379"/>
        <dbReference type="ChEBI" id="CHEBI:16526"/>
        <dbReference type="ChEBI" id="CHEBI:16810"/>
        <dbReference type="ChEBI" id="CHEBI:16842"/>
        <dbReference type="ChEBI" id="CHEBI:30031"/>
        <dbReference type="ChEBI" id="CHEBI:65280"/>
        <dbReference type="ChEBI" id="CHEBI:88221"/>
    </reaction>
</comment>
<comment type="catalytic activity">
    <reaction evidence="15">
        <text>a 5'-end methyltriphosphate-guanosine-ribonucleotide-snRNA + 2-oxoglutarate + O2 = a 5'-end triphospho-guanosine-ribonucleotide-snRNA + formaldehyde + succinate + CO2 + H(+)</text>
        <dbReference type="Rhea" id="RHEA:58784"/>
        <dbReference type="Rhea" id="RHEA-COMP:15220"/>
        <dbReference type="Rhea" id="RHEA-COMP:15221"/>
        <dbReference type="ChEBI" id="CHEBI:15378"/>
        <dbReference type="ChEBI" id="CHEBI:15379"/>
        <dbReference type="ChEBI" id="CHEBI:16526"/>
        <dbReference type="ChEBI" id="CHEBI:16810"/>
        <dbReference type="ChEBI" id="CHEBI:16842"/>
        <dbReference type="ChEBI" id="CHEBI:30031"/>
        <dbReference type="ChEBI" id="CHEBI:138278"/>
        <dbReference type="ChEBI" id="CHEBI:142789"/>
    </reaction>
</comment>
<comment type="cofactor">
    <cofactor evidence="9 14">
        <name>Fe(2+)</name>
        <dbReference type="ChEBI" id="CHEBI:29033"/>
    </cofactor>
    <text evidence="9">Binds 1 Fe(2+) ion per subunit.</text>
</comment>
<comment type="biophysicochemical properties">
    <kinetics>
        <KM evidence="11">39 uM for 2-oxoglutarate</KM>
    </kinetics>
</comment>
<comment type="subunit">
    <text evidence="9 13 14 15 17 18">Homooligomerizes; requires lysyl-hydroxylase activity (PubMed:22189873, PubMed:24360279). Interacts with LUC7L2, LUC7L3 and U2AF2/U2AF65 (PubMed:19574390). Interacts with CDK9 and CCNT1; the interaction is direct with CDK9 and associates the P-TEFb complex when active (PubMed:24360279). Interacts (via JmjC and N-terminal domains) with BRD4 (via NET domain); the interaction is stronger in presence of ssRNA and recruits JMJD6 on distal enhancers (PubMed:21555454, PubMed:24360279, PubMed:29176719). Interacts with ARGLU1; interaction may be involved in ARGLU1-mediated modulation of alternative splicing (PubMed:30698747).</text>
</comment>
<comment type="interaction">
    <interactant intactId="EBI-8464037">
        <id>Q6NYC1</id>
    </interactant>
    <interactant intactId="EBI-2808785">
        <id>Q9NWB6</id>
        <label>ARGLU1</label>
    </interactant>
    <organismsDiffer>false</organismsDiffer>
    <experiments>4</experiments>
</comment>
<comment type="interaction">
    <interactant intactId="EBI-8464037">
        <id>Q6NYC1</id>
    </interactant>
    <interactant intactId="EBI-723869">
        <id>O60885</id>
        <label>BRD4</label>
    </interactant>
    <organismsDiffer>false</organismsDiffer>
    <experiments>11</experiments>
</comment>
<comment type="interaction">
    <interactant intactId="EBI-8464037">
        <id>Q6NYC1</id>
    </interactant>
    <interactant intactId="EBI-2339854">
        <id>Q86X55</id>
        <label>CARM1</label>
    </interactant>
    <organismsDiffer>false</organismsDiffer>
    <experiments>2</experiments>
</comment>
<comment type="interaction">
    <interactant intactId="EBI-8464037">
        <id>Q6NYC1</id>
    </interactant>
    <interactant intactId="EBI-2836773">
        <id>Q9UK58</id>
        <label>CCNL1</label>
    </interactant>
    <organismsDiffer>false</organismsDiffer>
    <experiments>3</experiments>
</comment>
<comment type="interaction">
    <interactant intactId="EBI-8464037">
        <id>Q6NYC1</id>
    </interactant>
    <interactant intactId="EBI-1383449">
        <id>P50750</id>
        <label>CDK9</label>
    </interactant>
    <organismsDiffer>false</organismsDiffer>
    <experiments>5</experiments>
</comment>
<comment type="interaction">
    <interactant intactId="EBI-8464037">
        <id>Q6NYC1</id>
    </interactant>
    <interactant intactId="EBI-78473">
        <id>P03372</id>
        <label>ESR1</label>
    </interactant>
    <organismsDiffer>false</organismsDiffer>
    <experiments>8</experiments>
</comment>
<comment type="interaction">
    <interactant intactId="EBI-8464037">
        <id>Q6NYC1</id>
    </interactant>
    <interactant intactId="EBI-741729">
        <id>Q96NE9</id>
        <label>FRMD6</label>
    </interactant>
    <organismsDiffer>false</organismsDiffer>
    <experiments>3</experiments>
</comment>
<comment type="interaction">
    <interactant intactId="EBI-8464037">
        <id>Q6NYC1</id>
    </interactant>
    <interactant intactId="EBI-8464037">
        <id>Q6NYC1</id>
        <label>JMJD6</label>
    </interactant>
    <organismsDiffer>false</organismsDiffer>
    <experiments>3</experiments>
</comment>
<comment type="interaction">
    <interactant intactId="EBI-8464037">
        <id>Q6NYC1</id>
    </interactant>
    <interactant intactId="EBI-1052523">
        <id>Q9GZZ1</id>
        <label>NAA50</label>
    </interactant>
    <organismsDiffer>false</organismsDiffer>
    <experiments>6</experiments>
</comment>
<comment type="interaction">
    <interactant intactId="EBI-8464037">
        <id>Q6NYC1</id>
    </interactant>
    <interactant intactId="EBI-715374">
        <id>Q8NAV1</id>
        <label>PRPF38A</label>
    </interactant>
    <organismsDiffer>false</organismsDiffer>
    <experiments>5</experiments>
</comment>
<comment type="interaction">
    <interactant intactId="EBI-8464037">
        <id>Q6NYC1</id>
    </interactant>
    <interactant intactId="EBI-712189">
        <id>Q96IZ7</id>
        <label>RSRC1</label>
    </interactant>
    <organismsDiffer>false</organismsDiffer>
    <experiments>4</experiments>
</comment>
<comment type="interaction">
    <interactant intactId="EBI-8464037">
        <id>Q6NYC1</id>
    </interactant>
    <interactant intactId="EBI-366083">
        <id>P04637</id>
        <label>TP53</label>
    </interactant>
    <organismsDiffer>false</organismsDiffer>
    <experiments>7</experiments>
</comment>
<comment type="interaction">
    <interactant intactId="EBI-8464037">
        <id>Q6NYC1</id>
    </interactant>
    <interactant intactId="EBI-632461">
        <id>Q01081</id>
        <label>U2AF1</label>
    </interactant>
    <organismsDiffer>false</organismsDiffer>
    <experiments>4</experiments>
</comment>
<comment type="interaction">
    <interactant intactId="EBI-8464037">
        <id>Q6NYC1</id>
    </interactant>
    <interactant intactId="EBI-746345">
        <id>Q9NP64</id>
        <label>ZCCHC17</label>
    </interactant>
    <organismsDiffer>false</organismsDiffer>
    <experiments>6</experiments>
</comment>
<comment type="subcellular location">
    <subcellularLocation>
        <location evidence="5 12">Nucleus</location>
        <location evidence="5 12">Nucleoplasm</location>
    </subcellularLocation>
    <subcellularLocation>
        <location evidence="12">Nucleus</location>
        <location evidence="12">Nucleolus</location>
    </subcellularLocation>
    <subcellularLocation>
        <location evidence="12 16">Cytoplasm</location>
    </subcellularLocation>
    <text evidence="12">Mainly found throughout the nucleoplasm outside of regions containing heterochromatic DNA, with some localization in nucleolus. During mitosis, excluded from the nucleus and reappears in the telophase of the cell cycle.</text>
</comment>
<comment type="alternative products">
    <event type="alternative splicing"/>
    <isoform>
        <id>Q6NYC1-1</id>
        <name>1</name>
        <name>Alpha</name>
        <sequence type="displayed"/>
    </isoform>
    <isoform>
        <id>Q6NYC1-2</id>
        <name>2</name>
        <name>Beta</name>
        <sequence type="described" ref="VSP_014022 VSP_014023"/>
    </isoform>
    <isoform>
        <id>Q6NYC1-3</id>
        <name>3</name>
        <sequence type="described" ref="VSP_014023"/>
    </isoform>
</comment>
<comment type="tissue specificity">
    <text evidence="6 7 19">Highly expressed in the heart, skeletal muscle and kidney. Expressed at moderate or low level in brain, placenta, lung, liver, pancreas, spleen, thymus, prostate, testis and ovary. Up-regulated in many patients with chronic pancreatitis. Expressed in nursing thymic epithelial cells.</text>
</comment>
<comment type="induction">
    <text evidence="6">Up-regulated upon cytokine treatment, but not upon TNF treatment.</text>
</comment>
<comment type="domain">
    <text evidence="5">The nuclear localization signal motifs are necessary and sufficient to target it into the nucleus.</text>
</comment>
<comment type="PTM">
    <text evidence="14">Hydroxylates its own N-terminus; hydroxylation is required for homooligomerization.</text>
</comment>
<comment type="similarity">
    <text evidence="24">Belongs to the JMJD6 family.</text>
</comment>
<comment type="caution">
    <text evidence="24">Was initially thought to constitute the phosphatidylserine receptor, a receptor that mediates recognition of phosphatidylserine, a specific marker only present at the surface of apoptotic cells. Phosphatidylserine receptor probably participates in apoptotic cell phagocytosis. This protein was identified using phage display expressing mAb 217, an antibody that specifically recognizes phosphatidylserine receptor. However, its nuclear localization and the fact that mAb 217 antibody still recognizes the phosphatidylserine receptor in mice lacking JMJD6, strongly suggest that it does not constitute the receptor for phosphatidylserine and is not involved in apoptotic cell removal.</text>
</comment>
<comment type="sequence caution" evidence="24">
    <conflict type="erroneous initiation">
        <sequence resource="EMBL-CDS" id="AAH47003"/>
    </conflict>
    <text>Extended N-terminus.</text>
</comment>
<comment type="sequence caution" evidence="24">
    <conflict type="erroneous initiation">
        <sequence resource="EMBL-CDS" id="BAA25511"/>
    </conflict>
    <text>Extended N-terminus.</text>
</comment>
<name>JMJD6_HUMAN</name>
<proteinExistence type="evidence at protein level"/>
<accession>Q6NYC1</accession>
<accession>B3KMN8</accession>
<accession>B4DGX1</accession>
<accession>Q86VY0</accession>
<accession>Q8IUM5</accession>
<accession>Q9Y4E2</accession>
<organism>
    <name type="scientific">Homo sapiens</name>
    <name type="common">Human</name>
    <dbReference type="NCBI Taxonomy" id="9606"/>
    <lineage>
        <taxon>Eukaryota</taxon>
        <taxon>Metazoa</taxon>
        <taxon>Chordata</taxon>
        <taxon>Craniata</taxon>
        <taxon>Vertebrata</taxon>
        <taxon>Euteleostomi</taxon>
        <taxon>Mammalia</taxon>
        <taxon>Eutheria</taxon>
        <taxon>Euarchontoglires</taxon>
        <taxon>Primates</taxon>
        <taxon>Haplorrhini</taxon>
        <taxon>Catarrhini</taxon>
        <taxon>Hominidae</taxon>
        <taxon>Homo</taxon>
    </lineage>
</organism>
<reference key="1">
    <citation type="submission" date="2001-10" db="EMBL/GenBank/DDBJ databases">
        <title>Identification of an alternative form of phosphatidylserine receptor.</title>
        <authorList>
            <person name="Izawa M."/>
            <person name="Takahashi M."/>
        </authorList>
    </citation>
    <scope>NUCLEOTIDE SEQUENCE [MRNA] (ISOFORM 2)</scope>
    <source>
        <tissue>Stomach cancer</tissue>
    </source>
</reference>
<reference key="2">
    <citation type="journal article" date="1998" name="DNA Res.">
        <title>Prediction of the coding sequences of unidentified human genes. IX. The complete sequences of 100 new cDNA clones from brain which can code for large proteins in vitro.</title>
        <authorList>
            <person name="Nagase T."/>
            <person name="Ishikawa K."/>
            <person name="Miyajima N."/>
            <person name="Tanaka A."/>
            <person name="Kotani H."/>
            <person name="Nomura N."/>
            <person name="Ohara O."/>
        </authorList>
    </citation>
    <scope>NUCLEOTIDE SEQUENCE [LARGE SCALE MRNA] (ISOFORM 3)</scope>
    <scope>TISSUE SPECIFICITY</scope>
    <source>
        <tissue>Brain</tissue>
    </source>
</reference>
<reference key="3">
    <citation type="journal article" date="2004" name="Nat. Genet.">
        <title>Complete sequencing and characterization of 21,243 full-length human cDNAs.</title>
        <authorList>
            <person name="Ota T."/>
            <person name="Suzuki Y."/>
            <person name="Nishikawa T."/>
            <person name="Otsuki T."/>
            <person name="Sugiyama T."/>
            <person name="Irie R."/>
            <person name="Wakamatsu A."/>
            <person name="Hayashi K."/>
            <person name="Sato H."/>
            <person name="Nagai K."/>
            <person name="Kimura K."/>
            <person name="Makita H."/>
            <person name="Sekine M."/>
            <person name="Obayashi M."/>
            <person name="Nishi T."/>
            <person name="Shibahara T."/>
            <person name="Tanaka T."/>
            <person name="Ishii S."/>
            <person name="Yamamoto J."/>
            <person name="Saito K."/>
            <person name="Kawai Y."/>
            <person name="Isono Y."/>
            <person name="Nakamura Y."/>
            <person name="Nagahari K."/>
            <person name="Murakami K."/>
            <person name="Yasuda T."/>
            <person name="Iwayanagi T."/>
            <person name="Wagatsuma M."/>
            <person name="Shiratori A."/>
            <person name="Sudo H."/>
            <person name="Hosoiri T."/>
            <person name="Kaku Y."/>
            <person name="Kodaira H."/>
            <person name="Kondo H."/>
            <person name="Sugawara M."/>
            <person name="Takahashi M."/>
            <person name="Kanda K."/>
            <person name="Yokoi T."/>
            <person name="Furuya T."/>
            <person name="Kikkawa E."/>
            <person name="Omura Y."/>
            <person name="Abe K."/>
            <person name="Kamihara K."/>
            <person name="Katsuta N."/>
            <person name="Sato K."/>
            <person name="Tanikawa M."/>
            <person name="Yamazaki M."/>
            <person name="Ninomiya K."/>
            <person name="Ishibashi T."/>
            <person name="Yamashita H."/>
            <person name="Murakawa K."/>
            <person name="Fujimori K."/>
            <person name="Tanai H."/>
            <person name="Kimata M."/>
            <person name="Watanabe M."/>
            <person name="Hiraoka S."/>
            <person name="Chiba Y."/>
            <person name="Ishida S."/>
            <person name="Ono Y."/>
            <person name="Takiguchi S."/>
            <person name="Watanabe S."/>
            <person name="Yosida M."/>
            <person name="Hotuta T."/>
            <person name="Kusano J."/>
            <person name="Kanehori K."/>
            <person name="Takahashi-Fujii A."/>
            <person name="Hara H."/>
            <person name="Tanase T.-O."/>
            <person name="Nomura Y."/>
            <person name="Togiya S."/>
            <person name="Komai F."/>
            <person name="Hara R."/>
            <person name="Takeuchi K."/>
            <person name="Arita M."/>
            <person name="Imose N."/>
            <person name="Musashino K."/>
            <person name="Yuuki H."/>
            <person name="Oshima A."/>
            <person name="Sasaki N."/>
            <person name="Aotsuka S."/>
            <person name="Yoshikawa Y."/>
            <person name="Matsunawa H."/>
            <person name="Ichihara T."/>
            <person name="Shiohata N."/>
            <person name="Sano S."/>
            <person name="Moriya S."/>
            <person name="Momiyama H."/>
            <person name="Satoh N."/>
            <person name="Takami S."/>
            <person name="Terashima Y."/>
            <person name="Suzuki O."/>
            <person name="Nakagawa S."/>
            <person name="Senoh A."/>
            <person name="Mizoguchi H."/>
            <person name="Goto Y."/>
            <person name="Shimizu F."/>
            <person name="Wakebe H."/>
            <person name="Hishigaki H."/>
            <person name="Watanabe T."/>
            <person name="Sugiyama A."/>
            <person name="Takemoto M."/>
            <person name="Kawakami B."/>
            <person name="Yamazaki M."/>
            <person name="Watanabe K."/>
            <person name="Kumagai A."/>
            <person name="Itakura S."/>
            <person name="Fukuzumi Y."/>
            <person name="Fujimori Y."/>
            <person name="Komiyama M."/>
            <person name="Tashiro H."/>
            <person name="Tanigami A."/>
            <person name="Fujiwara T."/>
            <person name="Ono T."/>
            <person name="Yamada K."/>
            <person name="Fujii Y."/>
            <person name="Ozaki K."/>
            <person name="Hirao M."/>
            <person name="Ohmori Y."/>
            <person name="Kawabata A."/>
            <person name="Hikiji T."/>
            <person name="Kobatake N."/>
            <person name="Inagaki H."/>
            <person name="Ikema Y."/>
            <person name="Okamoto S."/>
            <person name="Okitani R."/>
            <person name="Kawakami T."/>
            <person name="Noguchi S."/>
            <person name="Itoh T."/>
            <person name="Shigeta K."/>
            <person name="Senba T."/>
            <person name="Matsumura K."/>
            <person name="Nakajima Y."/>
            <person name="Mizuno T."/>
            <person name="Morinaga M."/>
            <person name="Sasaki M."/>
            <person name="Togashi T."/>
            <person name="Oyama M."/>
            <person name="Hata H."/>
            <person name="Watanabe M."/>
            <person name="Komatsu T."/>
            <person name="Mizushima-Sugano J."/>
            <person name="Satoh T."/>
            <person name="Shirai Y."/>
            <person name="Takahashi Y."/>
            <person name="Nakagawa K."/>
            <person name="Okumura K."/>
            <person name="Nagase T."/>
            <person name="Nomura N."/>
            <person name="Kikuchi H."/>
            <person name="Masuho Y."/>
            <person name="Yamashita R."/>
            <person name="Nakai K."/>
            <person name="Yada T."/>
            <person name="Nakamura Y."/>
            <person name="Ohara O."/>
            <person name="Isogai T."/>
            <person name="Sugano S."/>
        </authorList>
    </citation>
    <scope>NUCLEOTIDE SEQUENCE [LARGE SCALE MRNA] (ISOFORMS 1 AND 3)</scope>
    <source>
        <tissue>Brain</tissue>
        <tissue>Embryo</tissue>
    </source>
</reference>
<reference key="4">
    <citation type="journal article" date="2006" name="Nature">
        <title>DNA sequence of human chromosome 17 and analysis of rearrangement in the human lineage.</title>
        <authorList>
            <person name="Zody M.C."/>
            <person name="Garber M."/>
            <person name="Adams D.J."/>
            <person name="Sharpe T."/>
            <person name="Harrow J."/>
            <person name="Lupski J.R."/>
            <person name="Nicholson C."/>
            <person name="Searle S.M."/>
            <person name="Wilming L."/>
            <person name="Young S.K."/>
            <person name="Abouelleil A."/>
            <person name="Allen N.R."/>
            <person name="Bi W."/>
            <person name="Bloom T."/>
            <person name="Borowsky M.L."/>
            <person name="Bugalter B.E."/>
            <person name="Butler J."/>
            <person name="Chang J.L."/>
            <person name="Chen C.-K."/>
            <person name="Cook A."/>
            <person name="Corum B."/>
            <person name="Cuomo C.A."/>
            <person name="de Jong P.J."/>
            <person name="DeCaprio D."/>
            <person name="Dewar K."/>
            <person name="FitzGerald M."/>
            <person name="Gilbert J."/>
            <person name="Gibson R."/>
            <person name="Gnerre S."/>
            <person name="Goldstein S."/>
            <person name="Grafham D.V."/>
            <person name="Grocock R."/>
            <person name="Hafez N."/>
            <person name="Hagopian D.S."/>
            <person name="Hart E."/>
            <person name="Norman C.H."/>
            <person name="Humphray S."/>
            <person name="Jaffe D.B."/>
            <person name="Jones M."/>
            <person name="Kamal M."/>
            <person name="Khodiyar V.K."/>
            <person name="LaButti K."/>
            <person name="Laird G."/>
            <person name="Lehoczky J."/>
            <person name="Liu X."/>
            <person name="Lokyitsang T."/>
            <person name="Loveland J."/>
            <person name="Lui A."/>
            <person name="Macdonald P."/>
            <person name="Major J.E."/>
            <person name="Matthews L."/>
            <person name="Mauceli E."/>
            <person name="McCarroll S.A."/>
            <person name="Mihalev A.H."/>
            <person name="Mudge J."/>
            <person name="Nguyen C."/>
            <person name="Nicol R."/>
            <person name="O'Leary S.B."/>
            <person name="Osoegawa K."/>
            <person name="Schwartz D.C."/>
            <person name="Shaw-Smith C."/>
            <person name="Stankiewicz P."/>
            <person name="Steward C."/>
            <person name="Swarbreck D."/>
            <person name="Venkataraman V."/>
            <person name="Whittaker C.A."/>
            <person name="Yang X."/>
            <person name="Zimmer A.R."/>
            <person name="Bradley A."/>
            <person name="Hubbard T."/>
            <person name="Birren B.W."/>
            <person name="Rogers J."/>
            <person name="Lander E.S."/>
            <person name="Nusbaum C."/>
        </authorList>
    </citation>
    <scope>NUCLEOTIDE SEQUENCE [LARGE SCALE GENOMIC DNA]</scope>
</reference>
<reference key="5">
    <citation type="submission" date="2005-07" db="EMBL/GenBank/DDBJ databases">
        <authorList>
            <person name="Mural R.J."/>
            <person name="Istrail S."/>
            <person name="Sutton G.G."/>
            <person name="Florea L."/>
            <person name="Halpern A.L."/>
            <person name="Mobarry C.M."/>
            <person name="Lippert R."/>
            <person name="Walenz B."/>
            <person name="Shatkay H."/>
            <person name="Dew I."/>
            <person name="Miller J.R."/>
            <person name="Flanigan M.J."/>
            <person name="Edwards N.J."/>
            <person name="Bolanos R."/>
            <person name="Fasulo D."/>
            <person name="Halldorsson B.V."/>
            <person name="Hannenhalli S."/>
            <person name="Turner R."/>
            <person name="Yooseph S."/>
            <person name="Lu F."/>
            <person name="Nusskern D.R."/>
            <person name="Shue B.C."/>
            <person name="Zheng X.H."/>
            <person name="Zhong F."/>
            <person name="Delcher A.L."/>
            <person name="Huson D.H."/>
            <person name="Kravitz S.A."/>
            <person name="Mouchard L."/>
            <person name="Reinert K."/>
            <person name="Remington K.A."/>
            <person name="Clark A.G."/>
            <person name="Waterman M.S."/>
            <person name="Eichler E.E."/>
            <person name="Adams M.D."/>
            <person name="Hunkapiller M.W."/>
            <person name="Myers E.W."/>
            <person name="Venter J.C."/>
        </authorList>
    </citation>
    <scope>NUCLEOTIDE SEQUENCE [LARGE SCALE GENOMIC DNA]</scope>
</reference>
<reference key="6">
    <citation type="journal article" date="2004" name="Genome Res.">
        <title>The status, quality, and expansion of the NIH full-length cDNA project: the Mammalian Gene Collection (MGC).</title>
        <authorList>
            <consortium name="The MGC Project Team"/>
        </authorList>
    </citation>
    <scope>NUCLEOTIDE SEQUENCE [LARGE SCALE MRNA] (ISOFORM 1)</scope>
    <source>
        <tissue>Skin</tissue>
        <tissue>Uterus</tissue>
    </source>
</reference>
<reference key="7">
    <citation type="journal article" date="2004" name="Exp. Cell Res.">
        <title>Nuclear localization of the phosphatidylserine receptor protein via multiple nuclear localization signals.</title>
        <authorList>
            <person name="Cui P."/>
            <person name="Qin B."/>
            <person name="Liu N."/>
            <person name="Pan G."/>
            <person name="Pei D."/>
        </authorList>
    </citation>
    <scope>SUBCELLULAR LOCATION</scope>
    <scope>NUCLEAR LOCALIZATION SIGNALS</scope>
</reference>
<reference key="8">
    <citation type="journal article" date="2004" name="J. Mol. Endocrinol.">
        <title>Phosphatidylserine receptor cooperates with high-density lipoprotein receptor in recognition of apoptotic cells by thymic nurse cells.</title>
        <authorList>
            <person name="Cao W.M."/>
            <person name="Murao K."/>
            <person name="Imachi H."/>
            <person name="Hiramine C."/>
            <person name="Abe H."/>
            <person name="Yu X."/>
            <person name="Dobashi H."/>
            <person name="Wong N.C.W."/>
            <person name="Takahara J."/>
            <person name="Ishida T."/>
        </authorList>
    </citation>
    <scope>TISSUE SPECIFICITY</scope>
    <scope>INDUCTION</scope>
</reference>
<reference key="9">
    <citation type="journal article" date="2005" name="Ann. Surg.">
        <title>Phosphatidylserine receptor in chronic pancreatitis: evidence for a macrophage independent role.</title>
        <authorList>
            <person name="Koeninger J."/>
            <person name="Balaz P."/>
            <person name="Wagner M."/>
            <person name="Shi X."/>
            <person name="Cima I."/>
            <person name="Zimmermann A."/>
            <person name="di Sebastiano P."/>
            <person name="Buechler M.W."/>
            <person name="Friess H."/>
        </authorList>
    </citation>
    <scope>TISSUE SPECIFICITY</scope>
    <scope>POSSIBLE FUNCTION</scope>
</reference>
<reference key="10">
    <citation type="journal article" date="2007" name="Science">
        <title>JMJD6 is a histone arginine demethylase.</title>
        <authorList>
            <person name="Chang B."/>
            <person name="Chen Y."/>
            <person name="Zhao Y."/>
            <person name="Bruick R.K."/>
        </authorList>
    </citation>
    <scope>FUNCTION AS HISTONE DEMETHYLASE</scope>
    <scope>MUTAGENESIS OF HIS-187; ASP-189 AND HIS-273</scope>
    <scope>CATALYTIC ACTIVITY</scope>
</reference>
<reference key="11">
    <citation type="journal article" date="2009" name="Science">
        <title>Jmjd6 catalyses lysyl-hydroxylation of U2AF65, a protein associated with RNA splicing.</title>
        <authorList>
            <person name="Webby C.J."/>
            <person name="Wolf A."/>
            <person name="Gromak N."/>
            <person name="Dreger M."/>
            <person name="Kramer H."/>
            <person name="Kessler B."/>
            <person name="Nielsen M.L."/>
            <person name="Schmitz C."/>
            <person name="Butler D.S."/>
            <person name="Yates J.R. III"/>
            <person name="Delahunty C.M."/>
            <person name="Hahn P."/>
            <person name="Lengeling A."/>
            <person name="Mann M."/>
            <person name="Proudfoot N.J."/>
            <person name="Schofield C.J."/>
            <person name="Boettger A."/>
        </authorList>
    </citation>
    <scope>FUNCTION AS LYSYL-HYDROXYLASE</scope>
    <scope>COFACTOR</scope>
    <scope>INTERACTION WITH LUC7L2; LUC7L3 AND U2AF2</scope>
    <scope>MUTAGENESIS OF HIS-187 AND ASP-189</scope>
    <scope>CATALYTIC ACTIVITY</scope>
</reference>
<reference key="12">
    <citation type="journal article" date="2010" name="PLoS ONE">
        <title>Analysis of Jmjd6 cellular localization and testing for its involvement in histone demethylation.</title>
        <authorList>
            <person name="Hahn P."/>
            <person name="Wegener I."/>
            <person name="Burrells A."/>
            <person name="Bose J."/>
            <person name="Wolf A."/>
            <person name="Erck C."/>
            <person name="Butler D."/>
            <person name="Schofield C.J."/>
            <person name="Bottger A."/>
            <person name="Lengeling A."/>
        </authorList>
    </citation>
    <scope>SUBCELLULAR LOCATION</scope>
    <scope>RNA-BINDING</scope>
    <scope>FUNCTION</scope>
</reference>
<reference key="13">
    <citation type="journal article" date="2011" name="BMC Syst. Biol.">
        <title>Initial characterization of the human central proteome.</title>
        <authorList>
            <person name="Burkard T.R."/>
            <person name="Planyavsky M."/>
            <person name="Kaupe I."/>
            <person name="Breitwieser F.P."/>
            <person name="Buerckstuemmer T."/>
            <person name="Bennett K.L."/>
            <person name="Superti-Furga G."/>
            <person name="Colinge J."/>
        </authorList>
    </citation>
    <scope>IDENTIFICATION BY MASS SPECTROMETRY [LARGE SCALE ANALYSIS]</scope>
</reference>
<reference key="14">
    <citation type="journal article" date="2011" name="Mol. Cell. Biol.">
        <title>The Brd4 extraterminal domain confers transcription activation independent of pTEFb by recruiting multiple proteins, including NSD3.</title>
        <authorList>
            <person name="Rahman S."/>
            <person name="Sowa M.E."/>
            <person name="Ottinger M."/>
            <person name="Smith J.A."/>
            <person name="Shi Y."/>
            <person name="Harper J.W."/>
            <person name="Howley P.M."/>
        </authorList>
    </citation>
    <scope>INTERACTION WITH BRD4</scope>
</reference>
<reference key="15">
    <citation type="journal article" date="2012" name="J. Cell. Biochem.">
        <title>The hydroxylation activity of Jmjd6 is required for its homo-oligomerization.</title>
        <authorList>
            <person name="Han G."/>
            <person name="Li J."/>
            <person name="Wang Y."/>
            <person name="Li X."/>
            <person name="Mao H."/>
            <person name="Liu Y."/>
            <person name="Chen C.D."/>
        </authorList>
    </citation>
    <scope>FUNCTION</scope>
    <scope>MUTAGENESIS OF HIS-187</scope>
    <scope>CATALYTIC ACTIVITY</scope>
    <scope>COFACTOR</scope>
    <scope>SUBUNIT</scope>
</reference>
<reference key="16">
    <citation type="journal article" date="2013" name="Cell">
        <title>Brd4 and JMJD6-associated anti-pause enhancers in regulation of transcriptional pause release.</title>
        <authorList>
            <person name="Liu W."/>
            <person name="Ma Q."/>
            <person name="Wong K."/>
            <person name="Li W."/>
            <person name="Ohgi K."/>
            <person name="Zhang J."/>
            <person name="Aggarwal A."/>
            <person name="Rosenfeld M.G."/>
        </authorList>
    </citation>
    <scope>FUNCTION</scope>
    <scope>INTERACTION WITH BRD4; CDK9 AND CCNT1</scope>
    <scope>CATALYTIC ACTIVITY</scope>
    <scope>MUTAGENESIS OF HIS-187</scope>
    <scope>SUBUNIT</scope>
</reference>
<reference key="17">
    <citation type="journal article" date="2013" name="J. Proteome Res.">
        <title>Toward a comprehensive characterization of a human cancer cell phosphoproteome.</title>
        <authorList>
            <person name="Zhou H."/>
            <person name="Di Palma S."/>
            <person name="Preisinger C."/>
            <person name="Peng M."/>
            <person name="Polat A.N."/>
            <person name="Heck A.J."/>
            <person name="Mohammed S."/>
        </authorList>
    </citation>
    <scope>PHOSPHORYLATION [LARGE SCALE ANALYSIS] AT SER-38</scope>
    <scope>IDENTIFICATION BY MASS SPECTROMETRY [LARGE SCALE ANALYSIS]</scope>
    <source>
        <tissue>Erythroleukemia</tissue>
    </source>
</reference>
<reference key="18">
    <citation type="journal article" date="2014" name="PLoS ONE">
        <title>JMJD6 regulates ERalpha methylation on arginine.</title>
        <authorList>
            <person name="Poulard C."/>
            <person name="Rambaud J."/>
            <person name="Hussein N."/>
            <person name="Corbo L."/>
            <person name="Le Romancer M."/>
        </authorList>
    </citation>
    <scope>FUNCTION</scope>
    <scope>SUBCELLULAR LOCATION</scope>
</reference>
<reference key="19">
    <citation type="journal article" date="2019" name="Nucleic Acids Res.">
        <title>ARGLU1 is a transcriptional coactivator and splicing regulator important for stress hormone signaling and development.</title>
        <authorList>
            <person name="Magomedova L."/>
            <person name="Tiefenbach J."/>
            <person name="Zilberman E."/>
            <person name="Le Billan F."/>
            <person name="Voisin V."/>
            <person name="Saikali M."/>
            <person name="Boivin V."/>
            <person name="Robitaille M."/>
            <person name="Gueroussov S."/>
            <person name="Irimia M."/>
            <person name="Ray D."/>
            <person name="Patel R."/>
            <person name="Xu C."/>
            <person name="Jeyasuria P."/>
            <person name="Bader G.D."/>
            <person name="Hughes T.R."/>
            <person name="Morris Q.D."/>
            <person name="Scott M.S."/>
            <person name="Krause H."/>
            <person name="Angers S."/>
            <person name="Blencowe B.J."/>
            <person name="Cummins C.L."/>
        </authorList>
    </citation>
    <scope>INTERACTION WITH ARGLU1</scope>
</reference>
<reference key="20">
    <citation type="journal article" date="2010" name="J. Mol. Biol.">
        <title>Crystal structure of the 2-oxoglutarate- and Fe(II)-dependent lysyl hydroxylase JMJD6.</title>
        <authorList>
            <person name="Mantri M."/>
            <person name="Krojer T."/>
            <person name="Bagg E.A."/>
            <person name="Webby C.J."/>
            <person name="Butler D.S."/>
            <person name="Kochan G."/>
            <person name="Kavanagh K.L."/>
            <person name="Oppermann U."/>
            <person name="McDonough M.A."/>
            <person name="Schofield C.J."/>
        </authorList>
    </citation>
    <scope>X-RAY CRYSTALLOGRAPHY (1.75 ANGSTROMS) OF 1-335 IN COMPLEX WITH NICKEL IONS</scope>
    <scope>FUNCTION</scope>
    <scope>BIOPHYSICOCHEMICAL PROPERTIES</scope>
    <scope>MUTAGENESIS OF TYR-131; LYS-204; GLU-231; THR-285 AND ASN-287</scope>
    <scope>CATALYTIC ACTIVITY</scope>
</reference>
<reference key="21">
    <citation type="journal article" date="2010" name="Proc. Natl. Acad. Sci. U.S.A.">
        <title>Interaction of JMJD6 with single-stranded RNA.</title>
        <authorList>
            <person name="Hong X."/>
            <person name="Zang J."/>
            <person name="White J."/>
            <person name="Wang C."/>
            <person name="Pan C.H."/>
            <person name="Zhao R."/>
            <person name="Murphy R.C."/>
            <person name="Dai S."/>
            <person name="Henson P."/>
            <person name="Kappler J.W."/>
            <person name="Hagman J."/>
            <person name="Zhang G."/>
        </authorList>
    </citation>
    <scope>X-RAY CRYSTALLOGRAPHY (2.7 ANGSTROMS) OF 1-334 IN COMPLEX WITH IRON IONS AND 2-OXOGLUTARATE</scope>
    <scope>POSSIBLE FUNCTION</scope>
    <scope>RNA-BINDING</scope>
</reference>
<reference evidence="26" key="22">
    <citation type="journal article" date="2017" name="Sci. Rep.">
        <title>Structural Mechanism of the Oxygenase JMJD6 Recognition by the Extraterminal (ET) Domain of BRD4.</title>
        <authorList>
            <person name="Konuma T."/>
            <person name="Yu D."/>
            <person name="Zhao C."/>
            <person name="Ju Y."/>
            <person name="Sharma R."/>
            <person name="Ren C."/>
            <person name="Zhang Q."/>
            <person name="Zhou M.M."/>
            <person name="Zeng L."/>
        </authorList>
    </citation>
    <scope>STRUCTURE BY NMR OF 84-96 IN COMPLEX WITH BRD4</scope>
    <scope>INTERACTION WITH BRD4</scope>
    <scope>SSRNA-BINDING</scope>
    <scope>MUTAGENESIS OF TRP-85; LEU-90; LYS-91 AND ARG-95</scope>
</reference>
<keyword id="KW-0002">3D-structure</keyword>
<keyword id="KW-0025">Alternative splicing</keyword>
<keyword id="KW-0156">Chromatin regulator</keyword>
<keyword id="KW-0963">Cytoplasm</keyword>
<keyword id="KW-0217">Developmental protein</keyword>
<keyword id="KW-0221">Differentiation</keyword>
<keyword id="KW-0223">Dioxygenase</keyword>
<keyword id="KW-0408">Iron</keyword>
<keyword id="KW-0479">Metal-binding</keyword>
<keyword id="KW-0507">mRNA processing</keyword>
<keyword id="KW-0508">mRNA splicing</keyword>
<keyword id="KW-0539">Nucleus</keyword>
<keyword id="KW-0560">Oxidoreductase</keyword>
<keyword id="KW-0597">Phosphoprotein</keyword>
<keyword id="KW-1267">Proteomics identification</keyword>
<keyword id="KW-1185">Reference proteome</keyword>
<keyword id="KW-0694">RNA-binding</keyword>
<keyword id="KW-0804">Transcription</keyword>
<keyword id="KW-0805">Transcription regulation</keyword>